<name>NU1C_THEVB</name>
<gene>
    <name evidence="1" type="primary">ndhA</name>
    <name type="ordered locus">tlr0667</name>
</gene>
<reference key="1">
    <citation type="journal article" date="2002" name="DNA Res.">
        <title>Complete genome structure of the thermophilic cyanobacterium Thermosynechococcus elongatus BP-1.</title>
        <authorList>
            <person name="Nakamura Y."/>
            <person name="Kaneko T."/>
            <person name="Sato S."/>
            <person name="Ikeuchi M."/>
            <person name="Katoh H."/>
            <person name="Sasamoto S."/>
            <person name="Watanabe A."/>
            <person name="Iriguchi M."/>
            <person name="Kawashima K."/>
            <person name="Kimura T."/>
            <person name="Kishida Y."/>
            <person name="Kiyokawa C."/>
            <person name="Kohara M."/>
            <person name="Matsumoto M."/>
            <person name="Matsuno A."/>
            <person name="Nakazaki N."/>
            <person name="Shimpo S."/>
            <person name="Sugimoto M."/>
            <person name="Takeuchi C."/>
            <person name="Yamada M."/>
            <person name="Tabata S."/>
        </authorList>
    </citation>
    <scope>NUCLEOTIDE SEQUENCE [LARGE SCALE GENOMIC DNA]</scope>
    <source>
        <strain>NIES-2133 / IAM M-273 / BP-1</strain>
    </source>
</reference>
<feature type="chain" id="PRO_0000240042" description="NAD(P)H-quinone oxidoreductase subunit 1">
    <location>
        <begin position="1"/>
        <end position="372"/>
    </location>
</feature>
<feature type="transmembrane region" description="Helical" evidence="1">
    <location>
        <begin position="27"/>
        <end position="47"/>
    </location>
</feature>
<feature type="transmembrane region" description="Helical" evidence="1">
    <location>
        <begin position="65"/>
        <end position="85"/>
    </location>
</feature>
<feature type="transmembrane region" description="Helical" evidence="1">
    <location>
        <begin position="97"/>
        <end position="117"/>
    </location>
</feature>
<feature type="transmembrane region" description="Helical" evidence="1">
    <location>
        <begin position="128"/>
        <end position="148"/>
    </location>
</feature>
<feature type="transmembrane region" description="Helical" evidence="1">
    <location>
        <begin position="176"/>
        <end position="196"/>
    </location>
</feature>
<feature type="transmembrane region" description="Helical" evidence="1">
    <location>
        <begin position="204"/>
        <end position="224"/>
    </location>
</feature>
<feature type="transmembrane region" description="Helical" evidence="1">
    <location>
        <begin position="254"/>
        <end position="274"/>
    </location>
</feature>
<feature type="transmembrane region" description="Helical" evidence="1">
    <location>
        <begin position="308"/>
        <end position="328"/>
    </location>
</feature>
<feature type="transmembrane region" description="Helical" evidence="1">
    <location>
        <begin position="347"/>
        <end position="367"/>
    </location>
</feature>
<feature type="helix" evidence="3">
    <location>
        <begin position="7"/>
        <end position="16"/>
    </location>
</feature>
<feature type="strand" evidence="3">
    <location>
        <begin position="17"/>
        <end position="20"/>
    </location>
</feature>
<feature type="helix" evidence="3">
    <location>
        <begin position="23"/>
        <end position="29"/>
    </location>
</feature>
<feature type="helix" evidence="3">
    <location>
        <begin position="31"/>
        <end position="59"/>
    </location>
</feature>
<feature type="strand" evidence="3">
    <location>
        <begin position="68"/>
        <end position="71"/>
    </location>
</feature>
<feature type="helix" evidence="3">
    <location>
        <begin position="72"/>
        <end position="74"/>
    </location>
</feature>
<feature type="helix" evidence="3">
    <location>
        <begin position="75"/>
        <end position="85"/>
    </location>
</feature>
<feature type="strand" evidence="4">
    <location>
        <begin position="92"/>
        <end position="94"/>
    </location>
</feature>
<feature type="strand" evidence="3">
    <location>
        <begin position="96"/>
        <end position="98"/>
    </location>
</feature>
<feature type="turn" evidence="3">
    <location>
        <begin position="99"/>
        <end position="101"/>
    </location>
</feature>
<feature type="helix" evidence="3">
    <location>
        <begin position="102"/>
        <end position="112"/>
    </location>
</feature>
<feature type="helix" evidence="3">
    <location>
        <begin position="113"/>
        <end position="115"/>
    </location>
</feature>
<feature type="strand" evidence="5">
    <location>
        <begin position="120"/>
        <end position="122"/>
    </location>
</feature>
<feature type="helix" evidence="3">
    <location>
        <begin position="131"/>
        <end position="139"/>
    </location>
</feature>
<feature type="helix" evidence="3">
    <location>
        <begin position="142"/>
        <end position="151"/>
    </location>
</feature>
<feature type="strand" evidence="3">
    <location>
        <begin position="153"/>
        <end position="155"/>
    </location>
</feature>
<feature type="turn" evidence="3">
    <location>
        <begin position="156"/>
        <end position="158"/>
    </location>
</feature>
<feature type="helix" evidence="3">
    <location>
        <begin position="159"/>
        <end position="170"/>
    </location>
</feature>
<feature type="helix" evidence="3">
    <location>
        <begin position="174"/>
        <end position="187"/>
    </location>
</feature>
<feature type="strand" evidence="6">
    <location>
        <begin position="188"/>
        <end position="190"/>
    </location>
</feature>
<feature type="helix" evidence="3">
    <location>
        <begin position="192"/>
        <end position="197"/>
    </location>
</feature>
<feature type="strand" evidence="3">
    <location>
        <begin position="200"/>
        <end position="202"/>
    </location>
</feature>
<feature type="turn" evidence="3">
    <location>
        <begin position="203"/>
        <end position="206"/>
    </location>
</feature>
<feature type="turn" evidence="3">
    <location>
        <begin position="208"/>
        <end position="211"/>
    </location>
</feature>
<feature type="helix" evidence="3">
    <location>
        <begin position="213"/>
        <end position="226"/>
    </location>
</feature>
<feature type="turn" evidence="6">
    <location>
        <begin position="230"/>
        <end position="232"/>
    </location>
</feature>
<feature type="strand" evidence="5">
    <location>
        <begin position="233"/>
        <end position="235"/>
    </location>
</feature>
<feature type="strand" evidence="3">
    <location>
        <begin position="240"/>
        <end position="242"/>
    </location>
</feature>
<feature type="strand" evidence="5">
    <location>
        <begin position="245"/>
        <end position="248"/>
    </location>
</feature>
<feature type="helix" evidence="3">
    <location>
        <begin position="252"/>
        <end position="275"/>
    </location>
</feature>
<feature type="turn" evidence="5">
    <location>
        <begin position="276"/>
        <end position="280"/>
    </location>
</feature>
<feature type="helix" evidence="3">
    <location>
        <begin position="286"/>
        <end position="293"/>
    </location>
</feature>
<feature type="helix" evidence="6">
    <location>
        <begin position="296"/>
        <end position="298"/>
    </location>
</feature>
<feature type="helix" evidence="3">
    <location>
        <begin position="300"/>
        <end position="329"/>
    </location>
</feature>
<feature type="turn" evidence="3">
    <location>
        <begin position="337"/>
        <end position="340"/>
    </location>
</feature>
<feature type="helix" evidence="3">
    <location>
        <begin position="341"/>
        <end position="344"/>
    </location>
</feature>
<feature type="turn" evidence="3">
    <location>
        <begin position="345"/>
        <end position="347"/>
    </location>
</feature>
<feature type="helix" evidence="3">
    <location>
        <begin position="348"/>
        <end position="365"/>
    </location>
</feature>
<feature type="turn" evidence="3">
    <location>
        <begin position="367"/>
        <end position="369"/>
    </location>
</feature>
<accession>Q8DL32</accession>
<dbReference type="EC" id="7.1.1.-" evidence="1"/>
<dbReference type="EMBL" id="BA000039">
    <property type="protein sequence ID" value="BAC08218.1"/>
    <property type="status" value="ALT_INIT"/>
    <property type="molecule type" value="Genomic_DNA"/>
</dbReference>
<dbReference type="RefSeq" id="NP_681456.1">
    <property type="nucleotide sequence ID" value="NC_004113.1"/>
</dbReference>
<dbReference type="RefSeq" id="WP_126985484.1">
    <property type="nucleotide sequence ID" value="NC_004113.1"/>
</dbReference>
<dbReference type="PDB" id="6HUM">
    <property type="method" value="EM"/>
    <property type="resolution" value="3.34 A"/>
    <property type="chains" value="A=1-372"/>
</dbReference>
<dbReference type="PDB" id="6KHI">
    <property type="method" value="EM"/>
    <property type="resolution" value="3.00 A"/>
    <property type="chains" value="A=1-372"/>
</dbReference>
<dbReference type="PDB" id="6KHJ">
    <property type="method" value="EM"/>
    <property type="resolution" value="3.00 A"/>
    <property type="chains" value="A=1-372"/>
</dbReference>
<dbReference type="PDB" id="6L7O">
    <property type="method" value="EM"/>
    <property type="resolution" value="3.20 A"/>
    <property type="chains" value="A=1-372"/>
</dbReference>
<dbReference type="PDB" id="6L7P">
    <property type="method" value="EM"/>
    <property type="resolution" value="3.60 A"/>
    <property type="chains" value="A=1-372"/>
</dbReference>
<dbReference type="PDB" id="6NBX">
    <property type="method" value="EM"/>
    <property type="resolution" value="3.50 A"/>
    <property type="chains" value="A=1-372"/>
</dbReference>
<dbReference type="PDB" id="6NBY">
    <property type="method" value="EM"/>
    <property type="resolution" value="3.10 A"/>
    <property type="chains" value="A=1-372"/>
</dbReference>
<dbReference type="PDB" id="6TJV">
    <property type="method" value="EM"/>
    <property type="resolution" value="3.20 A"/>
    <property type="chains" value="A=1-372"/>
</dbReference>
<dbReference type="PDBsum" id="6HUM"/>
<dbReference type="PDBsum" id="6KHI"/>
<dbReference type="PDBsum" id="6KHJ"/>
<dbReference type="PDBsum" id="6L7O"/>
<dbReference type="PDBsum" id="6L7P"/>
<dbReference type="PDBsum" id="6NBX"/>
<dbReference type="PDBsum" id="6NBY"/>
<dbReference type="PDBsum" id="6TJV"/>
<dbReference type="EMDB" id="EMD-0281"/>
<dbReference type="EMDB" id="EMD-0415"/>
<dbReference type="EMDB" id="EMD-0425"/>
<dbReference type="EMDB" id="EMD-0849"/>
<dbReference type="EMDB" id="EMD-0850"/>
<dbReference type="EMDB" id="EMD-9989"/>
<dbReference type="EMDB" id="EMD-9990"/>
<dbReference type="SMR" id="Q8DL32"/>
<dbReference type="IntAct" id="Q8DL32">
    <property type="interactions" value="1"/>
</dbReference>
<dbReference type="STRING" id="197221.gene:10747257"/>
<dbReference type="TCDB" id="3.D.1.8.2">
    <property type="family name" value="the h+ or na+-translocating nadh dehydrogenase (ndh) family"/>
</dbReference>
<dbReference type="EnsemblBacteria" id="BAC08218">
    <property type="protein sequence ID" value="BAC08218"/>
    <property type="gene ID" value="BAC08218"/>
</dbReference>
<dbReference type="KEGG" id="tel:tlr0667"/>
<dbReference type="PATRIC" id="fig|197221.4.peg.706"/>
<dbReference type="eggNOG" id="COG1005">
    <property type="taxonomic scope" value="Bacteria"/>
</dbReference>
<dbReference type="Proteomes" id="UP000000440">
    <property type="component" value="Chromosome"/>
</dbReference>
<dbReference type="GO" id="GO:0031676">
    <property type="term" value="C:plasma membrane-derived thylakoid membrane"/>
    <property type="evidence" value="ECO:0007669"/>
    <property type="project" value="UniProtKB-SubCell"/>
</dbReference>
<dbReference type="GO" id="GO:0003954">
    <property type="term" value="F:NADH dehydrogenase activity"/>
    <property type="evidence" value="ECO:0007669"/>
    <property type="project" value="TreeGrafter"/>
</dbReference>
<dbReference type="GO" id="GO:0016655">
    <property type="term" value="F:oxidoreductase activity, acting on NAD(P)H, quinone or similar compound as acceptor"/>
    <property type="evidence" value="ECO:0007669"/>
    <property type="project" value="UniProtKB-UniRule"/>
</dbReference>
<dbReference type="GO" id="GO:0048038">
    <property type="term" value="F:quinone binding"/>
    <property type="evidence" value="ECO:0007669"/>
    <property type="project" value="UniProtKB-KW"/>
</dbReference>
<dbReference type="GO" id="GO:0009060">
    <property type="term" value="P:aerobic respiration"/>
    <property type="evidence" value="ECO:0007669"/>
    <property type="project" value="TreeGrafter"/>
</dbReference>
<dbReference type="GO" id="GO:0019684">
    <property type="term" value="P:photosynthesis, light reaction"/>
    <property type="evidence" value="ECO:0007669"/>
    <property type="project" value="UniProtKB-UniRule"/>
</dbReference>
<dbReference type="HAMAP" id="MF_01350">
    <property type="entry name" value="NDH1_NuoH"/>
    <property type="match status" value="1"/>
</dbReference>
<dbReference type="InterPro" id="IPR001694">
    <property type="entry name" value="NADH_UbQ_OxRdtase_su1/FPO"/>
</dbReference>
<dbReference type="InterPro" id="IPR018086">
    <property type="entry name" value="NADH_UbQ_OxRdtase_su1_CS"/>
</dbReference>
<dbReference type="NCBIfam" id="NF004741">
    <property type="entry name" value="PRK06076.1-2"/>
    <property type="match status" value="1"/>
</dbReference>
<dbReference type="NCBIfam" id="NF004744">
    <property type="entry name" value="PRK06076.1-5"/>
    <property type="match status" value="1"/>
</dbReference>
<dbReference type="PANTHER" id="PTHR11432">
    <property type="entry name" value="NADH DEHYDROGENASE SUBUNIT 1"/>
    <property type="match status" value="1"/>
</dbReference>
<dbReference type="PANTHER" id="PTHR11432:SF3">
    <property type="entry name" value="NADH-UBIQUINONE OXIDOREDUCTASE CHAIN 1"/>
    <property type="match status" value="1"/>
</dbReference>
<dbReference type="Pfam" id="PF00146">
    <property type="entry name" value="NADHdh"/>
    <property type="match status" value="1"/>
</dbReference>
<dbReference type="PROSITE" id="PS00667">
    <property type="entry name" value="COMPLEX1_ND1_1"/>
    <property type="match status" value="1"/>
</dbReference>
<dbReference type="PROSITE" id="PS00668">
    <property type="entry name" value="COMPLEX1_ND1_2"/>
    <property type="match status" value="1"/>
</dbReference>
<protein>
    <recommendedName>
        <fullName evidence="1">NAD(P)H-quinone oxidoreductase subunit 1</fullName>
        <ecNumber evidence="1">7.1.1.-</ecNumber>
    </recommendedName>
    <alternativeName>
        <fullName evidence="1">NAD(P)H dehydrogenase I subunit 1</fullName>
    </alternativeName>
    <alternativeName>
        <fullName evidence="1">NDH-1 subunit 1</fullName>
    </alternativeName>
    <alternativeName>
        <fullName evidence="1">NDH-A</fullName>
    </alternativeName>
</protein>
<organism>
    <name type="scientific">Thermosynechococcus vestitus (strain NIES-2133 / IAM M-273 / BP-1)</name>
    <dbReference type="NCBI Taxonomy" id="197221"/>
    <lineage>
        <taxon>Bacteria</taxon>
        <taxon>Bacillati</taxon>
        <taxon>Cyanobacteriota</taxon>
        <taxon>Cyanophyceae</taxon>
        <taxon>Acaryochloridales</taxon>
        <taxon>Thermosynechococcaceae</taxon>
        <taxon>Thermosynechococcus</taxon>
    </lineage>
</organism>
<comment type="function">
    <text evidence="1">NDH-1 shuttles electrons from an unknown electron donor, via FMN and iron-sulfur (Fe-S) centers, to quinones in the respiratory and/or the photosynthetic chain. The immediate electron acceptor for the enzyme in this species is believed to be plastoquinone. Couples the redox reaction to proton translocation, and thus conserves the redox energy in a proton gradient.</text>
</comment>
<comment type="catalytic activity">
    <reaction evidence="1">
        <text>a plastoquinone + NADH + (n+1) H(+)(in) = a plastoquinol + NAD(+) + n H(+)(out)</text>
        <dbReference type="Rhea" id="RHEA:42608"/>
        <dbReference type="Rhea" id="RHEA-COMP:9561"/>
        <dbReference type="Rhea" id="RHEA-COMP:9562"/>
        <dbReference type="ChEBI" id="CHEBI:15378"/>
        <dbReference type="ChEBI" id="CHEBI:17757"/>
        <dbReference type="ChEBI" id="CHEBI:57540"/>
        <dbReference type="ChEBI" id="CHEBI:57945"/>
        <dbReference type="ChEBI" id="CHEBI:62192"/>
    </reaction>
</comment>
<comment type="catalytic activity">
    <reaction evidence="1">
        <text>a plastoquinone + NADPH + (n+1) H(+)(in) = a plastoquinol + NADP(+) + n H(+)(out)</text>
        <dbReference type="Rhea" id="RHEA:42612"/>
        <dbReference type="Rhea" id="RHEA-COMP:9561"/>
        <dbReference type="Rhea" id="RHEA-COMP:9562"/>
        <dbReference type="ChEBI" id="CHEBI:15378"/>
        <dbReference type="ChEBI" id="CHEBI:17757"/>
        <dbReference type="ChEBI" id="CHEBI:57783"/>
        <dbReference type="ChEBI" id="CHEBI:58349"/>
        <dbReference type="ChEBI" id="CHEBI:62192"/>
    </reaction>
</comment>
<comment type="subunit">
    <text evidence="1">NDH-1 is composed of at least 11 different subunits.</text>
</comment>
<comment type="subcellular location">
    <subcellularLocation>
        <location evidence="1">Cellular thylakoid membrane</location>
        <topology evidence="1">Multi-pass membrane protein</topology>
    </subcellularLocation>
</comment>
<comment type="similarity">
    <text evidence="1">Belongs to the complex I subunit 1 family.</text>
</comment>
<comment type="sequence caution" evidence="2">
    <conflict type="erroneous initiation">
        <sequence resource="EMBL-CDS" id="BAC08218"/>
    </conflict>
</comment>
<evidence type="ECO:0000255" key="1">
    <source>
        <dbReference type="HAMAP-Rule" id="MF_01350"/>
    </source>
</evidence>
<evidence type="ECO:0000305" key="2"/>
<evidence type="ECO:0007829" key="3">
    <source>
        <dbReference type="PDB" id="6KHI"/>
    </source>
</evidence>
<evidence type="ECO:0007829" key="4">
    <source>
        <dbReference type="PDB" id="6L7O"/>
    </source>
</evidence>
<evidence type="ECO:0007829" key="5">
    <source>
        <dbReference type="PDB" id="6NBY"/>
    </source>
</evidence>
<evidence type="ECO:0007829" key="6">
    <source>
        <dbReference type="PDB" id="6TJV"/>
    </source>
</evidence>
<proteinExistence type="evidence at protein level"/>
<sequence>MESGIDLQGQFISALQSLGLSHDLAKLLWLPLPMLMMLIVATVGVLVAVWLERKISAAVQQRIGPEYIGPLGILAPLADGLKLIFKEDVLPANSDRWLFTLGPAVVVIPVFLSYIIVPFGQNLLISNLAMGVFLWIALSSIAPIGLLMAGYASNNKYSLLGGLRAAAQSISYEIPLALAVLAVAMMSNGLGTVEIVEQQSQYGILSWNVWRQPIGFLVFWIAALAECERLPFDLPEAEEELVAGYQTEYAGMKFALFYLGAYVNLVLSALLVSVLYFGGWSFPIPLETIANLLGVSETNPFLQIAFAVLGITMTLIKAYFFVFLAILLRWTVPRVRIDQLLDLGWKFLLPVGLVNLLLTAGLKLAFPVAFGG</sequence>
<keyword id="KW-0002">3D-structure</keyword>
<keyword id="KW-0472">Membrane</keyword>
<keyword id="KW-0520">NAD</keyword>
<keyword id="KW-0521">NADP</keyword>
<keyword id="KW-0618">Plastoquinone</keyword>
<keyword id="KW-0874">Quinone</keyword>
<keyword id="KW-1185">Reference proteome</keyword>
<keyword id="KW-0793">Thylakoid</keyword>
<keyword id="KW-1278">Translocase</keyword>
<keyword id="KW-0812">Transmembrane</keyword>
<keyword id="KW-1133">Transmembrane helix</keyword>